<gene>
    <name evidence="1" type="primary">rplY</name>
    <name type="ordered locus">SG2262</name>
</gene>
<sequence length="94" mass="10571">MFTINAEVRKEQGKGASRRLRTANKFPAIIYGGSEAPIAIELDHDQVMNMQAKAEFYSEVLTLVVDGKEVKVKAQAVQRHAYKPKLTHIDFVRA</sequence>
<keyword id="KW-0687">Ribonucleoprotein</keyword>
<keyword id="KW-0689">Ribosomal protein</keyword>
<keyword id="KW-0694">RNA-binding</keyword>
<keyword id="KW-0699">rRNA-binding</keyword>
<feature type="chain" id="PRO_1000142592" description="Large ribosomal subunit protein bL25">
    <location>
        <begin position="1"/>
        <end position="94"/>
    </location>
</feature>
<proteinExistence type="inferred from homology"/>
<accession>B5RC63</accession>
<dbReference type="EMBL" id="AM933173">
    <property type="protein sequence ID" value="CAR38095.1"/>
    <property type="molecule type" value="Genomic_DNA"/>
</dbReference>
<dbReference type="RefSeq" id="WP_000494196.1">
    <property type="nucleotide sequence ID" value="NC_011274.1"/>
</dbReference>
<dbReference type="SMR" id="B5RC63"/>
<dbReference type="KEGG" id="seg:SG2262"/>
<dbReference type="HOGENOM" id="CLU_137946_0_0_6"/>
<dbReference type="Proteomes" id="UP000008321">
    <property type="component" value="Chromosome"/>
</dbReference>
<dbReference type="GO" id="GO:0022625">
    <property type="term" value="C:cytosolic large ribosomal subunit"/>
    <property type="evidence" value="ECO:0007669"/>
    <property type="project" value="TreeGrafter"/>
</dbReference>
<dbReference type="GO" id="GO:0008097">
    <property type="term" value="F:5S rRNA binding"/>
    <property type="evidence" value="ECO:0007669"/>
    <property type="project" value="InterPro"/>
</dbReference>
<dbReference type="GO" id="GO:0003735">
    <property type="term" value="F:structural constituent of ribosome"/>
    <property type="evidence" value="ECO:0007669"/>
    <property type="project" value="InterPro"/>
</dbReference>
<dbReference type="GO" id="GO:0006412">
    <property type="term" value="P:translation"/>
    <property type="evidence" value="ECO:0007669"/>
    <property type="project" value="UniProtKB-UniRule"/>
</dbReference>
<dbReference type="CDD" id="cd00495">
    <property type="entry name" value="Ribosomal_L25_TL5_CTC"/>
    <property type="match status" value="1"/>
</dbReference>
<dbReference type="FunFam" id="2.40.240.10:FF:000002">
    <property type="entry name" value="50S ribosomal protein L25"/>
    <property type="match status" value="1"/>
</dbReference>
<dbReference type="Gene3D" id="2.40.240.10">
    <property type="entry name" value="Ribosomal Protein L25, Chain P"/>
    <property type="match status" value="1"/>
</dbReference>
<dbReference type="HAMAP" id="MF_01336">
    <property type="entry name" value="Ribosomal_bL25"/>
    <property type="match status" value="1"/>
</dbReference>
<dbReference type="InterPro" id="IPR020056">
    <property type="entry name" value="Rbsml_bL25/Gln-tRNA_synth_N"/>
</dbReference>
<dbReference type="InterPro" id="IPR011035">
    <property type="entry name" value="Ribosomal_bL25/Gln-tRNA_synth"/>
</dbReference>
<dbReference type="InterPro" id="IPR020055">
    <property type="entry name" value="Ribosomal_bL25_short"/>
</dbReference>
<dbReference type="InterPro" id="IPR029751">
    <property type="entry name" value="Ribosomal_L25_dom"/>
</dbReference>
<dbReference type="InterPro" id="IPR020930">
    <property type="entry name" value="Ribosomal_uL5_bac-type"/>
</dbReference>
<dbReference type="NCBIfam" id="NF004612">
    <property type="entry name" value="PRK05943.1"/>
    <property type="match status" value="1"/>
</dbReference>
<dbReference type="PANTHER" id="PTHR33284">
    <property type="entry name" value="RIBOSOMAL PROTEIN L25/GLN-TRNA SYNTHETASE, ANTI-CODON-BINDING DOMAIN-CONTAINING PROTEIN"/>
    <property type="match status" value="1"/>
</dbReference>
<dbReference type="PANTHER" id="PTHR33284:SF1">
    <property type="entry name" value="RIBOSOMAL PROTEIN L25_GLN-TRNA SYNTHETASE, ANTI-CODON-BINDING DOMAIN-CONTAINING PROTEIN"/>
    <property type="match status" value="1"/>
</dbReference>
<dbReference type="Pfam" id="PF01386">
    <property type="entry name" value="Ribosomal_L25p"/>
    <property type="match status" value="1"/>
</dbReference>
<dbReference type="SUPFAM" id="SSF50715">
    <property type="entry name" value="Ribosomal protein L25-like"/>
    <property type="match status" value="1"/>
</dbReference>
<organism>
    <name type="scientific">Salmonella gallinarum (strain 287/91 / NCTC 13346)</name>
    <dbReference type="NCBI Taxonomy" id="550538"/>
    <lineage>
        <taxon>Bacteria</taxon>
        <taxon>Pseudomonadati</taxon>
        <taxon>Pseudomonadota</taxon>
        <taxon>Gammaproteobacteria</taxon>
        <taxon>Enterobacterales</taxon>
        <taxon>Enterobacteriaceae</taxon>
        <taxon>Salmonella</taxon>
    </lineage>
</organism>
<protein>
    <recommendedName>
        <fullName evidence="1">Large ribosomal subunit protein bL25</fullName>
    </recommendedName>
    <alternativeName>
        <fullName evidence="2">50S ribosomal protein L25</fullName>
    </alternativeName>
</protein>
<reference key="1">
    <citation type="journal article" date="2008" name="Genome Res.">
        <title>Comparative genome analysis of Salmonella enteritidis PT4 and Salmonella gallinarum 287/91 provides insights into evolutionary and host adaptation pathways.</title>
        <authorList>
            <person name="Thomson N.R."/>
            <person name="Clayton D.J."/>
            <person name="Windhorst D."/>
            <person name="Vernikos G."/>
            <person name="Davidson S."/>
            <person name="Churcher C."/>
            <person name="Quail M.A."/>
            <person name="Stevens M."/>
            <person name="Jones M.A."/>
            <person name="Watson M."/>
            <person name="Barron A."/>
            <person name="Layton A."/>
            <person name="Pickard D."/>
            <person name="Kingsley R.A."/>
            <person name="Bignell A."/>
            <person name="Clark L."/>
            <person name="Harris B."/>
            <person name="Ormond D."/>
            <person name="Abdellah Z."/>
            <person name="Brooks K."/>
            <person name="Cherevach I."/>
            <person name="Chillingworth T."/>
            <person name="Woodward J."/>
            <person name="Norberczak H."/>
            <person name="Lord A."/>
            <person name="Arrowsmith C."/>
            <person name="Jagels K."/>
            <person name="Moule S."/>
            <person name="Mungall K."/>
            <person name="Saunders M."/>
            <person name="Whitehead S."/>
            <person name="Chabalgoity J.A."/>
            <person name="Maskell D."/>
            <person name="Humphreys T."/>
            <person name="Roberts M."/>
            <person name="Barrow P.A."/>
            <person name="Dougan G."/>
            <person name="Parkhill J."/>
        </authorList>
    </citation>
    <scope>NUCLEOTIDE SEQUENCE [LARGE SCALE GENOMIC DNA]</scope>
    <source>
        <strain>287/91 / NCTC 13346</strain>
    </source>
</reference>
<evidence type="ECO:0000255" key="1">
    <source>
        <dbReference type="HAMAP-Rule" id="MF_01336"/>
    </source>
</evidence>
<evidence type="ECO:0000305" key="2"/>
<comment type="function">
    <text evidence="1">This is one of the proteins that binds to the 5S RNA in the ribosome where it forms part of the central protuberance.</text>
</comment>
<comment type="subunit">
    <text evidence="1">Part of the 50S ribosomal subunit; part of the 5S rRNA/L5/L18/L25 subcomplex. Contacts the 5S rRNA. Binds to the 5S rRNA independently of L5 and L18.</text>
</comment>
<comment type="similarity">
    <text evidence="1">Belongs to the bacterial ribosomal protein bL25 family.</text>
</comment>
<name>RL25_SALG2</name>